<feature type="chain" id="PRO_0000065781" description="Vi polysaccharide export inner-membrane protein VexD">
    <location>
        <begin position="1"/>
        <end position="434"/>
    </location>
</feature>
<feature type="transmembrane region" description="Helical" evidence="1">
    <location>
        <begin position="84"/>
        <end position="104"/>
    </location>
</feature>
<feature type="transmembrane region" description="Helical" evidence="1">
    <location>
        <begin position="409"/>
        <end position="429"/>
    </location>
</feature>
<feature type="region of interest" description="Disordered" evidence="2">
    <location>
        <begin position="1"/>
        <end position="58"/>
    </location>
</feature>
<feature type="compositionally biased region" description="Basic and acidic residues" evidence="2">
    <location>
        <begin position="1"/>
        <end position="50"/>
    </location>
</feature>
<organism>
    <name type="scientific">Salmonella typhi</name>
    <dbReference type="NCBI Taxonomy" id="90370"/>
    <lineage>
        <taxon>Bacteria</taxon>
        <taxon>Pseudomonadati</taxon>
        <taxon>Pseudomonadota</taxon>
        <taxon>Gammaproteobacteria</taxon>
        <taxon>Enterobacterales</taxon>
        <taxon>Enterobacteriaceae</taxon>
        <taxon>Salmonella</taxon>
    </lineage>
</organism>
<comment type="function">
    <text>May form an ATP-driven capsule polysaccharide export apparatus, in association with the VexA, VexB and VexC proteins.</text>
</comment>
<comment type="subcellular location">
    <subcellularLocation>
        <location evidence="3">Cell inner membrane</location>
        <topology evidence="3">Multi-pass membrane protein</topology>
    </subcellularLocation>
</comment>
<comment type="similarity">
    <text evidence="3">Belongs to the BexC/CtrB/KpsE family.</text>
</comment>
<gene>
    <name type="primary">vexD</name>
    <name type="ordered locus">STY4652</name>
    <name type="ordered locus">t4345</name>
</gene>
<keyword id="KW-0972">Capsule biogenesis/degradation</keyword>
<keyword id="KW-0997">Cell inner membrane</keyword>
<keyword id="KW-1003">Cell membrane</keyword>
<keyword id="KW-0472">Membrane</keyword>
<keyword id="KW-0625">Polysaccharide transport</keyword>
<keyword id="KW-0762">Sugar transport</keyword>
<keyword id="KW-0812">Transmembrane</keyword>
<keyword id="KW-1133">Transmembrane helix</keyword>
<keyword id="KW-0813">Transport</keyword>
<protein>
    <recommendedName>
        <fullName>Vi polysaccharide export inner-membrane protein VexD</fullName>
    </recommendedName>
</protein>
<evidence type="ECO:0000255" key="1"/>
<evidence type="ECO:0000256" key="2">
    <source>
        <dbReference type="SAM" id="MobiDB-lite"/>
    </source>
</evidence>
<evidence type="ECO:0000305" key="3"/>
<proteinExistence type="inferred from homology"/>
<reference key="1">
    <citation type="journal article" date="1993" name="J. Bacteriol.">
        <title>Complete nucleotide sequence and molecular characterization of ViaB region encoding Vi antigen in Salmonella typhi.</title>
        <authorList>
            <person name="Hashimoto Y."/>
            <person name="Li N."/>
            <person name="Yokoyama H."/>
            <person name="Ezaki T."/>
        </authorList>
    </citation>
    <scope>NUCLEOTIDE SEQUENCE [GENOMIC DNA]</scope>
    <source>
        <strain>GIFU 10007</strain>
    </source>
</reference>
<reference key="2">
    <citation type="journal article" date="2001" name="Nature">
        <title>Complete genome sequence of a multiple drug resistant Salmonella enterica serovar Typhi CT18.</title>
        <authorList>
            <person name="Parkhill J."/>
            <person name="Dougan G."/>
            <person name="James K.D."/>
            <person name="Thomson N.R."/>
            <person name="Pickard D."/>
            <person name="Wain J."/>
            <person name="Churcher C.M."/>
            <person name="Mungall K.L."/>
            <person name="Bentley S.D."/>
            <person name="Holden M.T.G."/>
            <person name="Sebaihia M."/>
            <person name="Baker S."/>
            <person name="Basham D."/>
            <person name="Brooks K."/>
            <person name="Chillingworth T."/>
            <person name="Connerton P."/>
            <person name="Cronin A."/>
            <person name="Davis P."/>
            <person name="Davies R.M."/>
            <person name="Dowd L."/>
            <person name="White N."/>
            <person name="Farrar J."/>
            <person name="Feltwell T."/>
            <person name="Hamlin N."/>
            <person name="Haque A."/>
            <person name="Hien T.T."/>
            <person name="Holroyd S."/>
            <person name="Jagels K."/>
            <person name="Krogh A."/>
            <person name="Larsen T.S."/>
            <person name="Leather S."/>
            <person name="Moule S."/>
            <person name="O'Gaora P."/>
            <person name="Parry C."/>
            <person name="Quail M.A."/>
            <person name="Rutherford K.M."/>
            <person name="Simmonds M."/>
            <person name="Skelton J."/>
            <person name="Stevens K."/>
            <person name="Whitehead S."/>
            <person name="Barrell B.G."/>
        </authorList>
    </citation>
    <scope>NUCLEOTIDE SEQUENCE [LARGE SCALE GENOMIC DNA]</scope>
    <source>
        <strain>CT18</strain>
    </source>
</reference>
<reference key="3">
    <citation type="journal article" date="2003" name="J. Bacteriol.">
        <title>Comparative genomics of Salmonella enterica serovar Typhi strains Ty2 and CT18.</title>
        <authorList>
            <person name="Deng W."/>
            <person name="Liou S.-R."/>
            <person name="Plunkett G. III"/>
            <person name="Mayhew G.F."/>
            <person name="Rose D.J."/>
            <person name="Burland V."/>
            <person name="Kodoyianni V."/>
            <person name="Schwartz D.C."/>
            <person name="Blattner F.R."/>
        </authorList>
    </citation>
    <scope>NUCLEOTIDE SEQUENCE [LARGE SCALE GENOMIC DNA]</scope>
    <source>
        <strain>ATCC 700931 / Ty2</strain>
    </source>
</reference>
<dbReference type="EMBL" id="D14156">
    <property type="protein sequence ID" value="BAA03199.1"/>
    <property type="molecule type" value="Genomic_DNA"/>
</dbReference>
<dbReference type="EMBL" id="AL513382">
    <property type="protein sequence ID" value="CAD06772.1"/>
    <property type="molecule type" value="Genomic_DNA"/>
</dbReference>
<dbReference type="EMBL" id="AE014613">
    <property type="protein sequence ID" value="AAO71798.1"/>
    <property type="molecule type" value="Genomic_DNA"/>
</dbReference>
<dbReference type="PIR" id="I36892">
    <property type="entry name" value="I36892"/>
</dbReference>
<dbReference type="RefSeq" id="NP_458731.1">
    <property type="nucleotide sequence ID" value="NC_003198.1"/>
</dbReference>
<dbReference type="RefSeq" id="WP_000431675.1">
    <property type="nucleotide sequence ID" value="NZ_WSUR01000012.1"/>
</dbReference>
<dbReference type="SMR" id="P43111"/>
<dbReference type="STRING" id="220341.gene:17588469"/>
<dbReference type="TCDB" id="8.A.4.2.2">
    <property type="family name" value="the cytoplasmic membrane-periplasmic auxiliary-2 (mpa2) family"/>
</dbReference>
<dbReference type="KEGG" id="stt:t4345"/>
<dbReference type="KEGG" id="sty:STY4652"/>
<dbReference type="PATRIC" id="fig|220341.7.peg.4751"/>
<dbReference type="eggNOG" id="COG3524">
    <property type="taxonomic scope" value="Bacteria"/>
</dbReference>
<dbReference type="HOGENOM" id="CLU_632666_0_0_6"/>
<dbReference type="OMA" id="IRRDPWI"/>
<dbReference type="OrthoDB" id="6593347at2"/>
<dbReference type="Proteomes" id="UP000000541">
    <property type="component" value="Chromosome"/>
</dbReference>
<dbReference type="Proteomes" id="UP000002670">
    <property type="component" value="Chromosome"/>
</dbReference>
<dbReference type="GO" id="GO:0009276">
    <property type="term" value="C:Gram-negative-bacterium-type cell wall"/>
    <property type="evidence" value="ECO:0007669"/>
    <property type="project" value="InterPro"/>
</dbReference>
<dbReference type="GO" id="GO:0005886">
    <property type="term" value="C:plasma membrane"/>
    <property type="evidence" value="ECO:0007669"/>
    <property type="project" value="UniProtKB-SubCell"/>
</dbReference>
<dbReference type="GO" id="GO:0005351">
    <property type="term" value="F:carbohydrate:proton symporter activity"/>
    <property type="evidence" value="ECO:0007669"/>
    <property type="project" value="InterPro"/>
</dbReference>
<dbReference type="GO" id="GO:0004713">
    <property type="term" value="F:protein tyrosine kinase activity"/>
    <property type="evidence" value="ECO:0007669"/>
    <property type="project" value="TreeGrafter"/>
</dbReference>
<dbReference type="GO" id="GO:0015774">
    <property type="term" value="P:polysaccharide transport"/>
    <property type="evidence" value="ECO:0007669"/>
    <property type="project" value="UniProtKB-KW"/>
</dbReference>
<dbReference type="InterPro" id="IPR050445">
    <property type="entry name" value="Bact_polysacc_biosynth/exp"/>
</dbReference>
<dbReference type="InterPro" id="IPR005705">
    <property type="entry name" value="BexC_CtrB_KpsE_VexD"/>
</dbReference>
<dbReference type="NCBIfam" id="TIGR01010">
    <property type="entry name" value="BexC_CtrB_KpsE"/>
    <property type="match status" value="1"/>
</dbReference>
<dbReference type="NCBIfam" id="NF011725">
    <property type="entry name" value="PRK15178.1"/>
    <property type="match status" value="1"/>
</dbReference>
<dbReference type="PANTHER" id="PTHR32309:SF13">
    <property type="entry name" value="FERRIC ENTEROBACTIN TRANSPORT PROTEIN FEPE"/>
    <property type="match status" value="1"/>
</dbReference>
<dbReference type="PANTHER" id="PTHR32309">
    <property type="entry name" value="TYROSINE-PROTEIN KINASE"/>
    <property type="match status" value="1"/>
</dbReference>
<name>VEXD_SALTI</name>
<sequence length="434" mass="49781">MENSERIKKWKEERAKVAQESRASRLQQKEDERALRQTEKSADAKSHHNPDAGWSATDADSVRRASLVIKERRVQQAKQSLRRLFLYIALPLLVIMLMSWILTSHFYSADATFIVQTDASQDNFSGTSFFGAGNKMSEGFQVREFILSKEMMDRMEKELGFLSYFAQDDIALFSRFHAPLGINDDPYRYYLSKVSVAVDIQQGMLRLNVKARSAKQAEFFAQRILSFAEQHVNTVSARMQKERILWLENDVKSAQENLGAARLELLKIQHIQKDIDPKETITAIYQLIAGFETQLAEAKAEYAQLMVNGLDQNPLIPRLSAKIKVLEKQIGEQRNRLSNKLGSQGSSESLSLFEDLRLQSEIAKARWESALQTLQQGKLQALRERQYLLIISQPMAESDTTRYADGTKWLLFFVLLGITYLVTSLLITIRRMRE</sequence>
<accession>P43111</accession>